<feature type="chain" id="PRO_1000022257" description="Potassium-transporting ATPase KdpC subunit">
    <location>
        <begin position="1"/>
        <end position="193"/>
    </location>
</feature>
<feature type="transmembrane region" description="Helical" evidence="1">
    <location>
        <begin position="14"/>
        <end position="34"/>
    </location>
</feature>
<evidence type="ECO:0000255" key="1">
    <source>
        <dbReference type="HAMAP-Rule" id="MF_00276"/>
    </source>
</evidence>
<name>KDPC_BACC1</name>
<proteinExistence type="inferred from homology"/>
<protein>
    <recommendedName>
        <fullName evidence="1">Potassium-transporting ATPase KdpC subunit</fullName>
    </recommendedName>
    <alternativeName>
        <fullName evidence="1">ATP phosphohydrolase [potassium-transporting] C chain</fullName>
    </alternativeName>
    <alternativeName>
        <fullName evidence="1">Potassium-binding and translocating subunit C</fullName>
    </alternativeName>
    <alternativeName>
        <fullName evidence="1">Potassium-translocating ATPase C chain</fullName>
    </alternativeName>
</protein>
<keyword id="KW-0067">ATP-binding</keyword>
<keyword id="KW-1003">Cell membrane</keyword>
<keyword id="KW-0406">Ion transport</keyword>
<keyword id="KW-0472">Membrane</keyword>
<keyword id="KW-0547">Nucleotide-binding</keyword>
<keyword id="KW-0630">Potassium</keyword>
<keyword id="KW-0633">Potassium transport</keyword>
<keyword id="KW-0812">Transmembrane</keyword>
<keyword id="KW-1133">Transmembrane helix</keyword>
<keyword id="KW-0813">Transport</keyword>
<dbReference type="EMBL" id="AE017194">
    <property type="protein sequence ID" value="AAS39743.1"/>
    <property type="molecule type" value="Genomic_DNA"/>
</dbReference>
<dbReference type="SMR" id="Q73DA2"/>
<dbReference type="KEGG" id="bca:BCE_0811"/>
<dbReference type="HOGENOM" id="CLU_077094_1_0_9"/>
<dbReference type="Proteomes" id="UP000002527">
    <property type="component" value="Chromosome"/>
</dbReference>
<dbReference type="GO" id="GO:0005886">
    <property type="term" value="C:plasma membrane"/>
    <property type="evidence" value="ECO:0007669"/>
    <property type="project" value="UniProtKB-SubCell"/>
</dbReference>
<dbReference type="GO" id="GO:0005524">
    <property type="term" value="F:ATP binding"/>
    <property type="evidence" value="ECO:0007669"/>
    <property type="project" value="UniProtKB-UniRule"/>
</dbReference>
<dbReference type="GO" id="GO:0008556">
    <property type="term" value="F:P-type potassium transmembrane transporter activity"/>
    <property type="evidence" value="ECO:0007669"/>
    <property type="project" value="InterPro"/>
</dbReference>
<dbReference type="HAMAP" id="MF_00276">
    <property type="entry name" value="KdpC"/>
    <property type="match status" value="1"/>
</dbReference>
<dbReference type="InterPro" id="IPR003820">
    <property type="entry name" value="KdpC"/>
</dbReference>
<dbReference type="NCBIfam" id="TIGR00681">
    <property type="entry name" value="kdpC"/>
    <property type="match status" value="1"/>
</dbReference>
<dbReference type="NCBIfam" id="NF001454">
    <property type="entry name" value="PRK00315.1"/>
    <property type="match status" value="1"/>
</dbReference>
<dbReference type="NCBIfam" id="NF010601">
    <property type="entry name" value="PRK13997.1"/>
    <property type="match status" value="1"/>
</dbReference>
<dbReference type="PANTHER" id="PTHR30042">
    <property type="entry name" value="POTASSIUM-TRANSPORTING ATPASE C CHAIN"/>
    <property type="match status" value="1"/>
</dbReference>
<dbReference type="PANTHER" id="PTHR30042:SF2">
    <property type="entry name" value="POTASSIUM-TRANSPORTING ATPASE KDPC SUBUNIT"/>
    <property type="match status" value="1"/>
</dbReference>
<dbReference type="Pfam" id="PF02669">
    <property type="entry name" value="KdpC"/>
    <property type="match status" value="1"/>
</dbReference>
<dbReference type="PIRSF" id="PIRSF001296">
    <property type="entry name" value="K_ATPase_KdpC"/>
    <property type="match status" value="1"/>
</dbReference>
<sequence>MAKKQSILSPIIRITFTFLVLCGLVYPLIVTGIAQAVMKDNADGSLIYNDKNEVIGSKLIGQNFTDPRYFHGRVSSIEYKAEASGSNNYAPSNPDLEKRVEKSIEEWKKQNPTVPVTEVPIDLVTNSGSGLDPDISPKAASVQVERISKITNIPKETLNQLIKDQTEGAALGLFGETRVNVLKLNLELQKLLK</sequence>
<comment type="function">
    <text evidence="1">Part of the high-affinity ATP-driven potassium transport (or Kdp) system, which catalyzes the hydrolysis of ATP coupled with the electrogenic transport of potassium into the cytoplasm. This subunit acts as a catalytic chaperone that increases the ATP-binding affinity of the ATP-hydrolyzing subunit KdpB by the formation of a transient KdpB/KdpC/ATP ternary complex.</text>
</comment>
<comment type="subunit">
    <text evidence="1">The system is composed of three essential subunits: KdpA, KdpB and KdpC.</text>
</comment>
<comment type="subcellular location">
    <subcellularLocation>
        <location evidence="1">Cell membrane</location>
        <topology evidence="1">Single-pass membrane protein</topology>
    </subcellularLocation>
</comment>
<comment type="similarity">
    <text evidence="1">Belongs to the KdpC family.</text>
</comment>
<organism>
    <name type="scientific">Bacillus cereus (strain ATCC 10987 / NRS 248)</name>
    <dbReference type="NCBI Taxonomy" id="222523"/>
    <lineage>
        <taxon>Bacteria</taxon>
        <taxon>Bacillati</taxon>
        <taxon>Bacillota</taxon>
        <taxon>Bacilli</taxon>
        <taxon>Bacillales</taxon>
        <taxon>Bacillaceae</taxon>
        <taxon>Bacillus</taxon>
        <taxon>Bacillus cereus group</taxon>
    </lineage>
</organism>
<accession>Q73DA2</accession>
<gene>
    <name evidence="1" type="primary">kdpC</name>
    <name type="ordered locus">BCE_0811</name>
</gene>
<reference key="1">
    <citation type="journal article" date="2004" name="Nucleic Acids Res.">
        <title>The genome sequence of Bacillus cereus ATCC 10987 reveals metabolic adaptations and a large plasmid related to Bacillus anthracis pXO1.</title>
        <authorList>
            <person name="Rasko D.A."/>
            <person name="Ravel J."/>
            <person name="Oekstad O.A."/>
            <person name="Helgason E."/>
            <person name="Cer R.Z."/>
            <person name="Jiang L."/>
            <person name="Shores K.A."/>
            <person name="Fouts D.E."/>
            <person name="Tourasse N.J."/>
            <person name="Angiuoli S.V."/>
            <person name="Kolonay J.F."/>
            <person name="Nelson W.C."/>
            <person name="Kolstoe A.-B."/>
            <person name="Fraser C.M."/>
            <person name="Read T.D."/>
        </authorList>
    </citation>
    <scope>NUCLEOTIDE SEQUENCE [LARGE SCALE GENOMIC DNA]</scope>
    <source>
        <strain>ATCC 10987 / NRS 248</strain>
    </source>
</reference>